<dbReference type="EMBL" id="X62540">
    <property type="protein sequence ID" value="CAA44424.1"/>
    <property type="molecule type" value="Genomic_DNA"/>
</dbReference>
<dbReference type="PIR" id="JQ1226">
    <property type="entry name" value="JQ1226"/>
</dbReference>
<dbReference type="SMR" id="P25761"/>
<dbReference type="eggNOG" id="COG0356">
    <property type="taxonomic scope" value="Bacteria"/>
</dbReference>
<dbReference type="GO" id="GO:0005886">
    <property type="term" value="C:plasma membrane"/>
    <property type="evidence" value="ECO:0007669"/>
    <property type="project" value="UniProtKB-SubCell"/>
</dbReference>
<dbReference type="GO" id="GO:0045259">
    <property type="term" value="C:proton-transporting ATP synthase complex"/>
    <property type="evidence" value="ECO:0007669"/>
    <property type="project" value="UniProtKB-KW"/>
</dbReference>
<dbReference type="GO" id="GO:0046933">
    <property type="term" value="F:proton-transporting ATP synthase activity, rotational mechanism"/>
    <property type="evidence" value="ECO:0007669"/>
    <property type="project" value="TreeGrafter"/>
</dbReference>
<dbReference type="GO" id="GO:0042777">
    <property type="term" value="P:proton motive force-driven plasma membrane ATP synthesis"/>
    <property type="evidence" value="ECO:0007669"/>
    <property type="project" value="TreeGrafter"/>
</dbReference>
<dbReference type="InterPro" id="IPR045082">
    <property type="entry name" value="ATP_syn_F0_a_bact/chloroplast"/>
</dbReference>
<dbReference type="InterPro" id="IPR000568">
    <property type="entry name" value="ATP_synth_F0_asu"/>
</dbReference>
<dbReference type="InterPro" id="IPR035908">
    <property type="entry name" value="F0_ATP_A_sf"/>
</dbReference>
<dbReference type="PANTHER" id="PTHR42823">
    <property type="entry name" value="ATP SYNTHASE SUBUNIT A, CHLOROPLASTIC"/>
    <property type="match status" value="1"/>
</dbReference>
<dbReference type="PANTHER" id="PTHR42823:SF3">
    <property type="entry name" value="ATP SYNTHASE SUBUNIT A, CHLOROPLASTIC"/>
    <property type="match status" value="1"/>
</dbReference>
<dbReference type="Pfam" id="PF00119">
    <property type="entry name" value="ATP-synt_A"/>
    <property type="match status" value="1"/>
</dbReference>
<dbReference type="SUPFAM" id="SSF81336">
    <property type="entry name" value="F1F0 ATP synthase subunit A"/>
    <property type="match status" value="1"/>
</dbReference>
<feature type="chain" id="PRO_0000082066" description="ATP synthase subunit a">
    <location>
        <begin position="1"/>
        <end position="153" status="greater than"/>
    </location>
</feature>
<feature type="transmembrane region" description="Helical" evidence="2">
    <location>
        <begin position="43"/>
        <end position="63"/>
    </location>
</feature>
<feature type="transmembrane region" description="Helical" evidence="2">
    <location>
        <begin position="104"/>
        <end position="124"/>
    </location>
</feature>
<feature type="non-terminal residue">
    <location>
        <position position="153"/>
    </location>
</feature>
<name>ATP6_PSEPU</name>
<sequence>MAAETASGYIQHHLQNLTYGQLPDGSWGFAHSAAEAKAMGFWAFHLDTLGWSVALGLIFLLIFRMAAKKATSGQPGGLQNFVEVMVDFVNGSVKDSFHGRSPVIAPLALTIFVWVFLMNAVDLIPVDWIPQLAILISGDPHIPFRAVSTTDPN</sequence>
<keyword id="KW-0066">ATP synthesis</keyword>
<keyword id="KW-0997">Cell inner membrane</keyword>
<keyword id="KW-1003">Cell membrane</keyword>
<keyword id="KW-0138">CF(0)</keyword>
<keyword id="KW-0375">Hydrogen ion transport</keyword>
<keyword id="KW-0406">Ion transport</keyword>
<keyword id="KW-0472">Membrane</keyword>
<keyword id="KW-0812">Transmembrane</keyword>
<keyword id="KW-1133">Transmembrane helix</keyword>
<keyword id="KW-0813">Transport</keyword>
<protein>
    <recommendedName>
        <fullName>ATP synthase subunit a</fullName>
    </recommendedName>
    <alternativeName>
        <fullName>ATP synthase F0 sector subunit a</fullName>
    </alternativeName>
    <alternativeName>
        <fullName>F-ATPase subunit 6</fullName>
    </alternativeName>
</protein>
<proteinExistence type="inferred from homology"/>
<reference key="1">
    <citation type="journal article" date="1992" name="Mol. Microbiol.">
        <title>Genes and their organization in the replication origin region of the bacterial chromosome.</title>
        <authorList>
            <person name="Ogasawara N."/>
            <person name="Yoshikawa H."/>
        </authorList>
    </citation>
    <scope>NUCLEOTIDE SEQUENCE [GENOMIC DNA]</scope>
    <source>
        <strain>TN2100</strain>
    </source>
</reference>
<gene>
    <name type="primary">atpB</name>
    <name type="synonym">uncB</name>
</gene>
<organism>
    <name type="scientific">Pseudomonas putida</name>
    <name type="common">Arthrobacter siderocapsulatus</name>
    <dbReference type="NCBI Taxonomy" id="303"/>
    <lineage>
        <taxon>Bacteria</taxon>
        <taxon>Pseudomonadati</taxon>
        <taxon>Pseudomonadota</taxon>
        <taxon>Gammaproteobacteria</taxon>
        <taxon>Pseudomonadales</taxon>
        <taxon>Pseudomonadaceae</taxon>
        <taxon>Pseudomonas</taxon>
    </lineage>
</organism>
<accession>P25761</accession>
<evidence type="ECO:0000250" key="1"/>
<evidence type="ECO:0000255" key="2"/>
<evidence type="ECO:0000305" key="3"/>
<comment type="function">
    <text evidence="1">Key component of the proton channel; it plays a direct role in the translocation of protons across the membrane.</text>
</comment>
<comment type="subunit">
    <text evidence="1">F-type ATPases have 2 components, CF(1) - the catalytic core - and CF(0) - the membrane proton channel. CF(1) has five subunits: alpha(3), beta(3), gamma(1), delta(1), epsilon(1). CF(0) has three main subunits: a(1), b(2) and c(9-12). The alpha and beta chains form an alternating ring which encloses part of the gamma chain. CF(1) is attached to CF(0) by a central stalk formed by the gamma and epsilon chains, while a peripheral stalk is formed by the delta and b chains (By similarity).</text>
</comment>
<comment type="subcellular location">
    <subcellularLocation>
        <location evidence="1">Cell inner membrane</location>
        <topology evidence="1">Multi-pass membrane protein</topology>
    </subcellularLocation>
</comment>
<comment type="similarity">
    <text evidence="3">Belongs to the ATPase A chain family.</text>
</comment>